<name>INO1_BRANA</name>
<comment type="function">
    <text evidence="2">Key enzyme in myo-inositol biosynthesis pathway that catalyzes the conversion of glucose 6-phosphate to 1-myo-inositol 1-phosphate in a NAD-dependent manner.</text>
</comment>
<comment type="catalytic activity">
    <reaction evidence="2">
        <text>D-glucose 6-phosphate = 1D-myo-inositol 3-phosphate</text>
        <dbReference type="Rhea" id="RHEA:10716"/>
        <dbReference type="ChEBI" id="CHEBI:58401"/>
        <dbReference type="ChEBI" id="CHEBI:61548"/>
        <dbReference type="EC" id="5.5.1.4"/>
    </reaction>
</comment>
<comment type="cofactor">
    <cofactor evidence="2">
        <name>NAD(+)</name>
        <dbReference type="ChEBI" id="CHEBI:57540"/>
    </cofactor>
</comment>
<comment type="pathway">
    <text>Polyol metabolism; myo-inositol biosynthesis; myo-inositol from D-glucose 6-phosphate: step 1/2.</text>
</comment>
<comment type="subcellular location">
    <subcellularLocation>
        <location evidence="2">Cytoplasm</location>
        <location evidence="2">Cytosol</location>
    </subcellularLocation>
    <subcellularLocation>
        <location evidence="2">Nucleus</location>
    </subcellularLocation>
</comment>
<comment type="similarity">
    <text evidence="3">Belongs to the myo-inositol 1-phosphate synthase family.</text>
</comment>
<protein>
    <recommendedName>
        <fullName>Inositol-3-phosphate synthase</fullName>
        <shortName>MIP synthase</shortName>
        <ecNumber evidence="2">5.5.1.4</ecNumber>
    </recommendedName>
    <alternativeName>
        <fullName>Myo-inositol 1-phosphate synthase</fullName>
        <shortName>IPS</shortName>
        <shortName>MI-1-P synthase</shortName>
    </alternativeName>
</protein>
<organism>
    <name type="scientific">Brassica napus</name>
    <name type="common">Rape</name>
    <dbReference type="NCBI Taxonomy" id="3708"/>
    <lineage>
        <taxon>Eukaryota</taxon>
        <taxon>Viridiplantae</taxon>
        <taxon>Streptophyta</taxon>
        <taxon>Embryophyta</taxon>
        <taxon>Tracheophyta</taxon>
        <taxon>Spermatophyta</taxon>
        <taxon>Magnoliopsida</taxon>
        <taxon>eudicotyledons</taxon>
        <taxon>Gunneridae</taxon>
        <taxon>Pentapetalae</taxon>
        <taxon>rosids</taxon>
        <taxon>malvids</taxon>
        <taxon>Brassicales</taxon>
        <taxon>Brassicaceae</taxon>
        <taxon>Brassiceae</taxon>
        <taxon>Brassica</taxon>
    </lineage>
</organism>
<keyword id="KW-0963">Cytoplasm</keyword>
<keyword id="KW-0398">Inositol biosynthesis</keyword>
<keyword id="KW-0413">Isomerase</keyword>
<keyword id="KW-0444">Lipid biosynthesis</keyword>
<keyword id="KW-0443">Lipid metabolism</keyword>
<keyword id="KW-0520">NAD</keyword>
<keyword id="KW-0539">Nucleus</keyword>
<keyword id="KW-0594">Phospholipid biosynthesis</keyword>
<keyword id="KW-1208">Phospholipid metabolism</keyword>
<sequence length="510" mass="56378">MFIESFKVESPNVKYTENEIHSVYDYETTEVVHENVNGAYQWIVKPKVVKYDFKTDTRVPKLGVMLVGWGGNNGSTLTAGVIANKEGISWATKDKVQQANYFGSLTQASSIRVGSFNGEEMYAPFKSLVPMVNPDDVVFGGWDISDMNLADAMGRAKVLDIDLQKQLRPYMENIVPLPGIYDPDFIAANQGSRANNVIKGTKKEQVDQIIKDMREFKEKNKVDKVVVLWTANTERYSNVIVGLNDTMENLMNSVDRDESEISPSTLYAIACVLEGIPFINGSPQNTFVPGLIDLAIKNNVLIGGDDFKSGQTKMKSVLVDFLVGAGIKPTSIVSYNHLGNNDGMNLSAPQTFRSKEISKSNVVDDMVASNGILFEPGEHPDHVVVIKYVPYVADSKRAMDEYTSEIFMGGKNTIVMHNTCEDSLLAAPIILDLVLLAEISTRIQFKSEKEGKFHSFHPVATKLSYLTKAPLVPPGTPVVNALSKQRAMLENILRACVGLAPENNMILEYK</sequence>
<dbReference type="EC" id="5.5.1.4" evidence="2"/>
<dbReference type="EMBL" id="U66307">
    <property type="protein sequence ID" value="AAB06756.2"/>
    <property type="molecule type" value="mRNA"/>
</dbReference>
<dbReference type="PIR" id="T08436">
    <property type="entry name" value="T08436"/>
</dbReference>
<dbReference type="SMR" id="Q96348"/>
<dbReference type="UniPathway" id="UPA00823">
    <property type="reaction ID" value="UER00787"/>
</dbReference>
<dbReference type="GO" id="GO:0005829">
    <property type="term" value="C:cytosol"/>
    <property type="evidence" value="ECO:0007669"/>
    <property type="project" value="UniProtKB-SubCell"/>
</dbReference>
<dbReference type="GO" id="GO:0005634">
    <property type="term" value="C:nucleus"/>
    <property type="evidence" value="ECO:0007669"/>
    <property type="project" value="UniProtKB-SubCell"/>
</dbReference>
<dbReference type="GO" id="GO:0004512">
    <property type="term" value="F:inositol-3-phosphate synthase activity"/>
    <property type="evidence" value="ECO:0007669"/>
    <property type="project" value="UniProtKB-EC"/>
</dbReference>
<dbReference type="GO" id="GO:0006021">
    <property type="term" value="P:inositol biosynthetic process"/>
    <property type="evidence" value="ECO:0007669"/>
    <property type="project" value="UniProtKB-UniPathway"/>
</dbReference>
<dbReference type="GO" id="GO:0008654">
    <property type="term" value="P:phospholipid biosynthetic process"/>
    <property type="evidence" value="ECO:0007669"/>
    <property type="project" value="UniProtKB-KW"/>
</dbReference>
<dbReference type="FunFam" id="3.30.360.10:FF:000040">
    <property type="entry name" value="Inositol 1-phosphate synthase"/>
    <property type="match status" value="1"/>
</dbReference>
<dbReference type="FunFam" id="3.40.50.720:FF:000107">
    <property type="entry name" value="inositol-3-phosphate synthase"/>
    <property type="match status" value="1"/>
</dbReference>
<dbReference type="FunFam" id="3.40.50.720:FF:000069">
    <property type="entry name" value="Inositol-3-phosphate synthase 1"/>
    <property type="match status" value="1"/>
</dbReference>
<dbReference type="Gene3D" id="3.40.50.720">
    <property type="entry name" value="NAD(P)-binding Rossmann-like Domain"/>
    <property type="match status" value="2"/>
</dbReference>
<dbReference type="InterPro" id="IPR002587">
    <property type="entry name" value="Myo-inos-1-P_Synthase"/>
</dbReference>
<dbReference type="InterPro" id="IPR013021">
    <property type="entry name" value="Myo-inos-1-P_Synthase_GAPDH"/>
</dbReference>
<dbReference type="InterPro" id="IPR036291">
    <property type="entry name" value="NAD(P)-bd_dom_sf"/>
</dbReference>
<dbReference type="PANTHER" id="PTHR11510">
    <property type="entry name" value="MYO-INOSITOL-1 PHOSPHATE SYNTHASE"/>
    <property type="match status" value="1"/>
</dbReference>
<dbReference type="Pfam" id="PF01658">
    <property type="entry name" value="Inos-1-P_synth"/>
    <property type="match status" value="1"/>
</dbReference>
<dbReference type="Pfam" id="PF07994">
    <property type="entry name" value="NAD_binding_5"/>
    <property type="match status" value="1"/>
</dbReference>
<dbReference type="PIRSF" id="PIRSF015578">
    <property type="entry name" value="Myoinos-ppht_syn"/>
    <property type="match status" value="1"/>
</dbReference>
<dbReference type="SUPFAM" id="SSF55347">
    <property type="entry name" value="Glyceraldehyde-3-phosphate dehydrogenase-like, C-terminal domain"/>
    <property type="match status" value="1"/>
</dbReference>
<dbReference type="SUPFAM" id="SSF51735">
    <property type="entry name" value="NAD(P)-binding Rossmann-fold domains"/>
    <property type="match status" value="1"/>
</dbReference>
<feature type="chain" id="PRO_0000195189" description="Inositol-3-phosphate synthase">
    <location>
        <begin position="1"/>
        <end position="510"/>
    </location>
</feature>
<feature type="binding site" evidence="1">
    <location>
        <position position="70"/>
    </location>
    <ligand>
        <name>NAD(+)</name>
        <dbReference type="ChEBI" id="CHEBI:57540"/>
    </ligand>
</feature>
<feature type="binding site" evidence="1">
    <location>
        <position position="71"/>
    </location>
    <ligand>
        <name>NAD(+)</name>
        <dbReference type="ChEBI" id="CHEBI:57540"/>
    </ligand>
</feature>
<feature type="binding site" evidence="1">
    <location>
        <position position="72"/>
    </location>
    <ligand>
        <name>NAD(+)</name>
        <dbReference type="ChEBI" id="CHEBI:57540"/>
    </ligand>
</feature>
<feature type="binding site" evidence="1">
    <location>
        <position position="73"/>
    </location>
    <ligand>
        <name>NAD(+)</name>
        <dbReference type="ChEBI" id="CHEBI:57540"/>
    </ligand>
</feature>
<feature type="binding site" evidence="1">
    <location>
        <position position="143"/>
    </location>
    <ligand>
        <name>NAD(+)</name>
        <dbReference type="ChEBI" id="CHEBI:57540"/>
    </ligand>
</feature>
<feature type="binding site" evidence="1">
    <location>
        <position position="180"/>
    </location>
    <ligand>
        <name>NAD(+)</name>
        <dbReference type="ChEBI" id="CHEBI:57540"/>
    </ligand>
</feature>
<feature type="binding site" evidence="1">
    <location>
        <position position="190"/>
    </location>
    <ligand>
        <name>NAD(+)</name>
        <dbReference type="ChEBI" id="CHEBI:57540"/>
    </ligand>
</feature>
<feature type="binding site" evidence="1">
    <location>
        <position position="193"/>
    </location>
    <ligand>
        <name>NAD(+)</name>
        <dbReference type="ChEBI" id="CHEBI:57540"/>
    </ligand>
</feature>
<feature type="binding site" evidence="1">
    <location>
        <position position="230"/>
    </location>
    <ligand>
        <name>NAD(+)</name>
        <dbReference type="ChEBI" id="CHEBI:57540"/>
    </ligand>
</feature>
<feature type="binding site" evidence="1">
    <location>
        <position position="231"/>
    </location>
    <ligand>
        <name>NAD(+)</name>
        <dbReference type="ChEBI" id="CHEBI:57540"/>
    </ligand>
</feature>
<feature type="binding site" evidence="1">
    <location>
        <position position="232"/>
    </location>
    <ligand>
        <name>NAD(+)</name>
        <dbReference type="ChEBI" id="CHEBI:57540"/>
    </ligand>
</feature>
<feature type="binding site" evidence="1">
    <location>
        <position position="233"/>
    </location>
    <ligand>
        <name>NAD(+)</name>
        <dbReference type="ChEBI" id="CHEBI:57540"/>
    </ligand>
</feature>
<feature type="binding site" evidence="1">
    <location>
        <position position="281"/>
    </location>
    <ligand>
        <name>NAD(+)</name>
        <dbReference type="ChEBI" id="CHEBI:57540"/>
    </ligand>
</feature>
<feature type="binding site" evidence="1">
    <location>
        <position position="282"/>
    </location>
    <ligand>
        <name>NAD(+)</name>
        <dbReference type="ChEBI" id="CHEBI:57540"/>
    </ligand>
</feature>
<feature type="binding site" evidence="1">
    <location>
        <position position="306"/>
    </location>
    <ligand>
        <name>NAD(+)</name>
        <dbReference type="ChEBI" id="CHEBI:57540"/>
    </ligand>
</feature>
<feature type="binding site" evidence="1">
    <location>
        <position position="309"/>
    </location>
    <ligand>
        <name>NAD(+)</name>
        <dbReference type="ChEBI" id="CHEBI:57540"/>
    </ligand>
</feature>
<feature type="binding site" evidence="1">
    <location>
        <position position="340"/>
    </location>
    <ligand>
        <name>NAD(+)</name>
        <dbReference type="ChEBI" id="CHEBI:57540"/>
    </ligand>
</feature>
<feature type="binding site" evidence="1">
    <location>
        <position position="341"/>
    </location>
    <ligand>
        <name>NAD(+)</name>
        <dbReference type="ChEBI" id="CHEBI:57540"/>
    </ligand>
</feature>
<feature type="binding site" evidence="1">
    <location>
        <position position="342"/>
    </location>
    <ligand>
        <name>NAD(+)</name>
        <dbReference type="ChEBI" id="CHEBI:57540"/>
    </ligand>
</feature>
<feature type="binding site" evidence="1">
    <location>
        <position position="355"/>
    </location>
    <ligand>
        <name>NAD(+)</name>
        <dbReference type="ChEBI" id="CHEBI:57540"/>
    </ligand>
</feature>
<feature type="binding site" evidence="1">
    <location>
        <position position="393"/>
    </location>
    <ligand>
        <name>NAD(+)</name>
        <dbReference type="ChEBI" id="CHEBI:57540"/>
    </ligand>
</feature>
<feature type="binding site" evidence="1">
    <location>
        <position position="394"/>
    </location>
    <ligand>
        <name>NAD(+)</name>
        <dbReference type="ChEBI" id="CHEBI:57540"/>
    </ligand>
</feature>
<feature type="binding site" evidence="1">
    <location>
        <position position="422"/>
    </location>
    <ligand>
        <name>NAD(+)</name>
        <dbReference type="ChEBI" id="CHEBI:57540"/>
    </ligand>
</feature>
<feature type="binding site" evidence="1">
    <location>
        <position position="423"/>
    </location>
    <ligand>
        <name>NAD(+)</name>
        <dbReference type="ChEBI" id="CHEBI:57540"/>
    </ligand>
</feature>
<accession>Q96348</accession>
<reference key="1">
    <citation type="submission" date="1996-08" db="EMBL/GenBank/DDBJ databases">
        <title>Cloning of a full length cDNA encoding myo-inositol 1-phosphate synthase from Brassica napus.</title>
        <authorList>
            <person name="Hussain A."/>
            <person name="Bourgeois J."/>
            <person name="Polvi S."/>
            <person name="Tsang E."/>
            <person name="Keller W.A."/>
            <person name="Georges F."/>
        </authorList>
    </citation>
    <scope>NUCLEOTIDE SEQUENCE [MRNA]</scope>
</reference>
<evidence type="ECO:0000250" key="1">
    <source>
        <dbReference type="UniProtKB" id="P11986"/>
    </source>
</evidence>
<evidence type="ECO:0000250" key="2">
    <source>
        <dbReference type="UniProtKB" id="P42801"/>
    </source>
</evidence>
<evidence type="ECO:0000305" key="3"/>
<proteinExistence type="evidence at transcript level"/>